<comment type="subunit">
    <text evidence="1">Part of the 50S ribosomal subunit.</text>
</comment>
<comment type="similarity">
    <text evidence="1">Belongs to the universal ribosomal protein uL30 family.</text>
</comment>
<reference key="1">
    <citation type="journal article" date="2002" name="J. Mol. Microbiol. Biotechnol.">
        <title>The genome of Methanosarcina mazei: evidence for lateral gene transfer between Bacteria and Archaea.</title>
        <authorList>
            <person name="Deppenmeier U."/>
            <person name="Johann A."/>
            <person name="Hartsch T."/>
            <person name="Merkl R."/>
            <person name="Schmitz R.A."/>
            <person name="Martinez-Arias R."/>
            <person name="Henne A."/>
            <person name="Wiezer A."/>
            <person name="Baeumer S."/>
            <person name="Jacobi C."/>
            <person name="Brueggemann H."/>
            <person name="Lienard T."/>
            <person name="Christmann A."/>
            <person name="Boemecke M."/>
            <person name="Steckel S."/>
            <person name="Bhattacharyya A."/>
            <person name="Lykidis A."/>
            <person name="Overbeek R."/>
            <person name="Klenk H.-P."/>
            <person name="Gunsalus R.P."/>
            <person name="Fritz H.-J."/>
            <person name="Gottschalk G."/>
        </authorList>
    </citation>
    <scope>NUCLEOTIDE SEQUENCE [LARGE SCALE GENOMIC DNA]</scope>
    <source>
        <strain>ATCC BAA-159 / DSM 3647 / Goe1 / Go1 / JCM 11833 / OCM 88</strain>
    </source>
</reference>
<evidence type="ECO:0000255" key="1">
    <source>
        <dbReference type="HAMAP-Rule" id="MF_01371"/>
    </source>
</evidence>
<evidence type="ECO:0000305" key="2"/>
<organism>
    <name type="scientific">Methanosarcina mazei (strain ATCC BAA-159 / DSM 3647 / Goe1 / Go1 / JCM 11833 / OCM 88)</name>
    <name type="common">Methanosarcina frisia</name>
    <dbReference type="NCBI Taxonomy" id="192952"/>
    <lineage>
        <taxon>Archaea</taxon>
        <taxon>Methanobacteriati</taxon>
        <taxon>Methanobacteriota</taxon>
        <taxon>Stenosarchaea group</taxon>
        <taxon>Methanomicrobia</taxon>
        <taxon>Methanosarcinales</taxon>
        <taxon>Methanosarcinaceae</taxon>
        <taxon>Methanosarcina</taxon>
    </lineage>
</organism>
<protein>
    <recommendedName>
        <fullName evidence="1">Large ribosomal subunit protein uL30</fullName>
    </recommendedName>
    <alternativeName>
        <fullName evidence="2">50S ribosomal protein L30</fullName>
    </alternativeName>
</protein>
<gene>
    <name evidence="1" type="primary">rpl30</name>
    <name type="ordered locus">MM_2145</name>
</gene>
<feature type="chain" id="PRO_0000273907" description="Large ribosomal subunit protein uL30">
    <location>
        <begin position="1"/>
        <end position="153"/>
    </location>
</feature>
<accession>Q8PV29</accession>
<name>RL30_METMA</name>
<dbReference type="EMBL" id="AE008384">
    <property type="protein sequence ID" value="AAM31841.1"/>
    <property type="molecule type" value="Genomic_DNA"/>
</dbReference>
<dbReference type="RefSeq" id="WP_011034076.1">
    <property type="nucleotide sequence ID" value="NC_003901.1"/>
</dbReference>
<dbReference type="SMR" id="Q8PV29"/>
<dbReference type="KEGG" id="mma:MM_2145"/>
<dbReference type="PATRIC" id="fig|192952.21.peg.2459"/>
<dbReference type="eggNOG" id="arCOG04086">
    <property type="taxonomic scope" value="Archaea"/>
</dbReference>
<dbReference type="HOGENOM" id="CLU_055156_6_0_2"/>
<dbReference type="Proteomes" id="UP000000595">
    <property type="component" value="Chromosome"/>
</dbReference>
<dbReference type="GO" id="GO:0022625">
    <property type="term" value="C:cytosolic large ribosomal subunit"/>
    <property type="evidence" value="ECO:0007669"/>
    <property type="project" value="TreeGrafter"/>
</dbReference>
<dbReference type="GO" id="GO:0003723">
    <property type="term" value="F:RNA binding"/>
    <property type="evidence" value="ECO:0007669"/>
    <property type="project" value="TreeGrafter"/>
</dbReference>
<dbReference type="GO" id="GO:0003735">
    <property type="term" value="F:structural constituent of ribosome"/>
    <property type="evidence" value="ECO:0007669"/>
    <property type="project" value="InterPro"/>
</dbReference>
<dbReference type="GO" id="GO:0000463">
    <property type="term" value="P:maturation of LSU-rRNA from tricistronic rRNA transcript (SSU-rRNA, 5.8S rRNA, LSU-rRNA)"/>
    <property type="evidence" value="ECO:0007669"/>
    <property type="project" value="TreeGrafter"/>
</dbReference>
<dbReference type="GO" id="GO:0006412">
    <property type="term" value="P:translation"/>
    <property type="evidence" value="ECO:0007669"/>
    <property type="project" value="UniProtKB-UniRule"/>
</dbReference>
<dbReference type="CDD" id="cd01657">
    <property type="entry name" value="Ribosomal_L7_archeal_euk"/>
    <property type="match status" value="1"/>
</dbReference>
<dbReference type="FunFam" id="1.10.15.30:FF:000002">
    <property type="entry name" value="50S ribosomal protein L30"/>
    <property type="match status" value="1"/>
</dbReference>
<dbReference type="Gene3D" id="1.10.15.30">
    <property type="match status" value="1"/>
</dbReference>
<dbReference type="Gene3D" id="3.30.1390.20">
    <property type="entry name" value="Ribosomal protein L30, ferredoxin-like fold domain"/>
    <property type="match status" value="1"/>
</dbReference>
<dbReference type="HAMAP" id="MF_01371_A">
    <property type="entry name" value="Ribosomal_uL30_A"/>
    <property type="match status" value="1"/>
</dbReference>
<dbReference type="InterPro" id="IPR036919">
    <property type="entry name" value="Ribo_uL30_ferredoxin-like_sf"/>
</dbReference>
<dbReference type="InterPro" id="IPR039699">
    <property type="entry name" value="Ribosomal_uL30"/>
</dbReference>
<dbReference type="InterPro" id="IPR005997">
    <property type="entry name" value="Ribosomal_uL30_arc"/>
</dbReference>
<dbReference type="InterPro" id="IPR018038">
    <property type="entry name" value="Ribosomal_uL30_CS"/>
</dbReference>
<dbReference type="InterPro" id="IPR035808">
    <property type="entry name" value="Ribosomal_uL30_euk_arc"/>
</dbReference>
<dbReference type="InterPro" id="IPR016082">
    <property type="entry name" value="Ribosomal_uL30_ferredoxin-like"/>
</dbReference>
<dbReference type="NCBIfam" id="NF004711">
    <property type="entry name" value="PRK06049.1"/>
    <property type="match status" value="1"/>
</dbReference>
<dbReference type="NCBIfam" id="TIGR01309">
    <property type="entry name" value="uL30_arch"/>
    <property type="match status" value="1"/>
</dbReference>
<dbReference type="PANTHER" id="PTHR11524">
    <property type="entry name" value="60S RIBOSOMAL PROTEIN L7"/>
    <property type="match status" value="1"/>
</dbReference>
<dbReference type="PANTHER" id="PTHR11524:SF16">
    <property type="entry name" value="LARGE RIBOSOMAL SUBUNIT PROTEIN UL30"/>
    <property type="match status" value="1"/>
</dbReference>
<dbReference type="Pfam" id="PF00327">
    <property type="entry name" value="Ribosomal_L30"/>
    <property type="match status" value="1"/>
</dbReference>
<dbReference type="SUPFAM" id="SSF55129">
    <property type="entry name" value="Ribosomal protein L30p/L7e"/>
    <property type="match status" value="1"/>
</dbReference>
<dbReference type="PROSITE" id="PS00634">
    <property type="entry name" value="RIBOSOMAL_L30"/>
    <property type="match status" value="1"/>
</dbReference>
<sequence length="153" mass="17548">MYAVVRLRGQVNVRYTIEDTMKMLRLHKVNHCVFLPENPHYKGMVQKVKDYVAYGKIDAKTLAEVLENRGRLEGDARLTEEYIRENTDYDSIKAFAEAVVEGKASLKDVPKLKPVFRLHPPRKGHAGIKRTVQQGGVLGNHEENINVLLHKMR</sequence>
<keyword id="KW-0687">Ribonucleoprotein</keyword>
<keyword id="KW-0689">Ribosomal protein</keyword>
<proteinExistence type="inferred from homology"/>